<accession>P43346</accession>
<comment type="function">
    <text evidence="4">Phosphorylates the deoxyribonucleosides deoxycytidine, deoxyguanosine and deoxyadenosine.</text>
</comment>
<comment type="catalytic activity">
    <reaction evidence="4">
        <text>2'-deoxycytidine + a ribonucleoside 5'-triphosphate = dCMP + a ribonucleoside 5'-diphosphate + H(+)</text>
        <dbReference type="Rhea" id="RHEA:20061"/>
        <dbReference type="ChEBI" id="CHEBI:15378"/>
        <dbReference type="ChEBI" id="CHEBI:15698"/>
        <dbReference type="ChEBI" id="CHEBI:57566"/>
        <dbReference type="ChEBI" id="CHEBI:57930"/>
        <dbReference type="ChEBI" id="CHEBI:61557"/>
        <dbReference type="EC" id="2.7.1.74"/>
    </reaction>
</comment>
<comment type="catalytic activity">
    <reaction evidence="4">
        <text>2'-deoxyadenosine + ATP = dAMP + ADP + H(+)</text>
        <dbReference type="Rhea" id="RHEA:23452"/>
        <dbReference type="ChEBI" id="CHEBI:15378"/>
        <dbReference type="ChEBI" id="CHEBI:17256"/>
        <dbReference type="ChEBI" id="CHEBI:30616"/>
        <dbReference type="ChEBI" id="CHEBI:58245"/>
        <dbReference type="ChEBI" id="CHEBI:456216"/>
        <dbReference type="EC" id="2.7.1.76"/>
    </reaction>
</comment>
<comment type="catalytic activity">
    <reaction evidence="4">
        <text>2'-deoxyguanosine + ATP = dGMP + ADP + H(+)</text>
        <dbReference type="Rhea" id="RHEA:19201"/>
        <dbReference type="ChEBI" id="CHEBI:15378"/>
        <dbReference type="ChEBI" id="CHEBI:17172"/>
        <dbReference type="ChEBI" id="CHEBI:30616"/>
        <dbReference type="ChEBI" id="CHEBI:57673"/>
        <dbReference type="ChEBI" id="CHEBI:456216"/>
        <dbReference type="EC" id="2.7.1.113"/>
    </reaction>
</comment>
<comment type="biophysicochemical properties">
    <kinetics>
        <KM evidence="4">0.1 uM for deoxycytidine</KM>
        <KM evidence="4">553 uM for deoxyadenosine</KM>
    </kinetics>
</comment>
<comment type="subunit">
    <text evidence="2">Homodimer.</text>
</comment>
<comment type="subcellular location">
    <subcellularLocation>
        <location evidence="2">Nucleus</location>
    </subcellularLocation>
</comment>
<comment type="PTM">
    <text evidence="2">Phosphorylated and activated in vitro upon phosphorylation at Ser-74 by CSNK1D/CK1.</text>
</comment>
<comment type="similarity">
    <text evidence="5">Belongs to the DCK/DGK family.</text>
</comment>
<evidence type="ECO:0000250" key="1"/>
<evidence type="ECO:0000250" key="2">
    <source>
        <dbReference type="UniProtKB" id="P27707"/>
    </source>
</evidence>
<evidence type="ECO:0000255" key="3"/>
<evidence type="ECO:0000269" key="4">
    <source>
    </source>
</evidence>
<evidence type="ECO:0000305" key="5"/>
<evidence type="ECO:0007744" key="6">
    <source>
    </source>
</evidence>
<keyword id="KW-0067">ATP-binding</keyword>
<keyword id="KW-0418">Kinase</keyword>
<keyword id="KW-0547">Nucleotide-binding</keyword>
<keyword id="KW-0539">Nucleus</keyword>
<keyword id="KW-0597">Phosphoprotein</keyword>
<keyword id="KW-1185">Reference proteome</keyword>
<keyword id="KW-0808">Transferase</keyword>
<name>DCK_MOUSE</name>
<feature type="chain" id="PRO_0000175091" description="Deoxycytidine kinase">
    <location>
        <begin position="1"/>
        <end position="260"/>
    </location>
</feature>
<feature type="active site" description="Proton acceptor" evidence="3">
    <location>
        <position position="127"/>
    </location>
</feature>
<feature type="binding site" evidence="1">
    <location>
        <begin position="28"/>
        <end position="36"/>
    </location>
    <ligand>
        <name>ATP</name>
        <dbReference type="ChEBI" id="CHEBI:30616"/>
    </ligand>
</feature>
<feature type="binding site" evidence="1">
    <location>
        <position position="53"/>
    </location>
    <ligand>
        <name>substrate</name>
    </ligand>
</feature>
<feature type="binding site" evidence="1">
    <location>
        <position position="86"/>
    </location>
    <ligand>
        <name>substrate</name>
    </ligand>
</feature>
<feature type="binding site" evidence="1">
    <location>
        <position position="97"/>
    </location>
    <ligand>
        <name>substrate</name>
    </ligand>
</feature>
<feature type="binding site" evidence="1">
    <location>
        <position position="128"/>
    </location>
    <ligand>
        <name>substrate</name>
    </ligand>
</feature>
<feature type="binding site" evidence="1">
    <location>
        <position position="133"/>
    </location>
    <ligand>
        <name>substrate</name>
    </ligand>
</feature>
<feature type="binding site" evidence="1">
    <location>
        <begin position="188"/>
        <end position="192"/>
    </location>
    <ligand>
        <name>ATP</name>
        <dbReference type="ChEBI" id="CHEBI:30616"/>
    </ligand>
</feature>
<feature type="binding site" evidence="1">
    <location>
        <position position="197"/>
    </location>
    <ligand>
        <name>substrate</name>
    </ligand>
</feature>
<feature type="binding site" evidence="1">
    <location>
        <begin position="240"/>
        <end position="242"/>
    </location>
    <ligand>
        <name>ATP</name>
        <dbReference type="ChEBI" id="CHEBI:30616"/>
    </ligand>
</feature>
<feature type="modified residue" description="Phosphoserine; by CK1" evidence="2">
    <location>
        <position position="11"/>
    </location>
</feature>
<feature type="modified residue" description="Phosphoserine; by CK1" evidence="2">
    <location>
        <position position="15"/>
    </location>
</feature>
<feature type="modified residue" description="Phosphothreonine; by CK1" evidence="2">
    <location>
        <position position="72"/>
    </location>
</feature>
<feature type="modified residue" description="Phosphoserine" evidence="6">
    <location>
        <position position="74"/>
    </location>
</feature>
<gene>
    <name type="primary">Dck</name>
</gene>
<organism>
    <name type="scientific">Mus musculus</name>
    <name type="common">Mouse</name>
    <dbReference type="NCBI Taxonomy" id="10090"/>
    <lineage>
        <taxon>Eukaryota</taxon>
        <taxon>Metazoa</taxon>
        <taxon>Chordata</taxon>
        <taxon>Craniata</taxon>
        <taxon>Vertebrata</taxon>
        <taxon>Euteleostomi</taxon>
        <taxon>Mammalia</taxon>
        <taxon>Eutheria</taxon>
        <taxon>Euarchontoglires</taxon>
        <taxon>Glires</taxon>
        <taxon>Rodentia</taxon>
        <taxon>Myomorpha</taxon>
        <taxon>Muroidea</taxon>
        <taxon>Muridae</taxon>
        <taxon>Murinae</taxon>
        <taxon>Mus</taxon>
        <taxon>Mus</taxon>
    </lineage>
</organism>
<sequence>MATPPKRFCPSPSTSSEGTRIKKISIEGNIAAGKSTFVNILKQASEDWEVVPEPVARWCNVQSTQEEFEELTTSQKSGGNVLQMMYEKPERWSFTFQSYACLSRIRAQLASLNGKLKDAEKPVLFFERSVYSDRYIFASNLYESDCMNETEWTIYQDWHDWMNSQFGQSLELDGIIYLRATPEKCLNRIYLRGRNEEQGIPLEYLEKLHYKHESWLLHRTLKTSFDYLQEVPVLTLDVNEDFKDKHESLVEKVKEFLSTL</sequence>
<protein>
    <recommendedName>
        <fullName>Deoxycytidine kinase</fullName>
        <shortName>dCK</shortName>
        <ecNumber evidence="4">2.7.1.74</ecNumber>
    </recommendedName>
    <alternativeName>
        <fullName>Deoxyadenosine kinase</fullName>
        <ecNumber evidence="4">2.7.1.76</ecNumber>
    </alternativeName>
    <alternativeName>
        <fullName>Deoxyguanosine kinase</fullName>
        <ecNumber evidence="4">2.7.1.113</ecNumber>
    </alternativeName>
</protein>
<reference key="1">
    <citation type="journal article" date="1994" name="J. Biol. Chem.">
        <title>Cloning and expression of mouse deoxycytidine kinase. Pure recombinant mouse and human enzymes show differences in substrate specificity.</title>
        <authorList>
            <person name="Karlsson A."/>
            <person name="Johansson M."/>
            <person name="Eriksson S."/>
        </authorList>
    </citation>
    <scope>NUCLEOTIDE SEQUENCE [MRNA]</scope>
    <scope>FUNCTION</scope>
    <scope>CATALYTIC ACTIVITY</scope>
    <scope>BIOPHYSICOCHEMICAL PROPERTIES</scope>
</reference>
<reference key="2">
    <citation type="journal article" date="2000" name="FEBS Lett.">
        <title>Conserved gene structure and transcription factor sites in the human and mouse deoxycytidine kinase genes.</title>
        <authorList>
            <person name="Johansson M."/>
            <person name="Norda A."/>
            <person name="Karlsson A."/>
        </authorList>
    </citation>
    <scope>NUCLEOTIDE SEQUENCE [GENOMIC DNA]</scope>
    <source>
        <strain>129/SvJ</strain>
        <tissue>Liver</tissue>
    </source>
</reference>
<reference key="3">
    <citation type="journal article" date="2004" name="Genome Res.">
        <title>The status, quality, and expansion of the NIH full-length cDNA project: the Mammalian Gene Collection (MGC).</title>
        <authorList>
            <consortium name="The MGC Project Team"/>
        </authorList>
    </citation>
    <scope>NUCLEOTIDE SEQUENCE [LARGE SCALE MRNA]</scope>
    <source>
        <strain>C57BL/6J</strain>
        <tissue>Brain</tissue>
    </source>
</reference>
<reference key="4">
    <citation type="journal article" date="2007" name="Science">
        <title>ATM and ATR substrate analysis reveals extensive protein networks responsive to DNA damage.</title>
        <authorList>
            <person name="Matsuoka S."/>
            <person name="Ballif B.A."/>
            <person name="Smogorzewska A."/>
            <person name="McDonald E.R. III"/>
            <person name="Hurov K.E."/>
            <person name="Luo J."/>
            <person name="Bakalarski C.E."/>
            <person name="Zhao Z."/>
            <person name="Solimini N."/>
            <person name="Lerenthal Y."/>
            <person name="Shiloh Y."/>
            <person name="Gygi S.P."/>
            <person name="Elledge S.J."/>
        </authorList>
    </citation>
    <scope>IDENTIFICATION BY MASS SPECTROMETRY [LARGE SCALE ANALYSIS]</scope>
    <source>
        <tissue>Embryonic fibroblast</tissue>
    </source>
</reference>
<reference key="5">
    <citation type="journal article" date="2010" name="Cell">
        <title>A tissue-specific atlas of mouse protein phosphorylation and expression.</title>
        <authorList>
            <person name="Huttlin E.L."/>
            <person name="Jedrychowski M.P."/>
            <person name="Elias J.E."/>
            <person name="Goswami T."/>
            <person name="Rad R."/>
            <person name="Beausoleil S.A."/>
            <person name="Villen J."/>
            <person name="Haas W."/>
            <person name="Sowa M.E."/>
            <person name="Gygi S.P."/>
        </authorList>
    </citation>
    <scope>PHOSPHORYLATION [LARGE SCALE ANALYSIS] AT SER-74</scope>
    <scope>IDENTIFICATION BY MASS SPECTROMETRY [LARGE SCALE ANALYSIS]</scope>
    <source>
        <tissue>Lung</tissue>
        <tissue>Spleen</tissue>
    </source>
</reference>
<proteinExistence type="evidence at protein level"/>
<dbReference type="EC" id="2.7.1.74" evidence="4"/>
<dbReference type="EC" id="2.7.1.76" evidence="4"/>
<dbReference type="EC" id="2.7.1.113" evidence="4"/>
<dbReference type="EMBL" id="X77731">
    <property type="protein sequence ID" value="CAA54787.1"/>
    <property type="molecule type" value="mRNA"/>
</dbReference>
<dbReference type="EMBL" id="AF260315">
    <property type="protein sequence ID" value="AAG53743.1"/>
    <property type="molecule type" value="Genomic_DNA"/>
</dbReference>
<dbReference type="EMBL" id="BC060062">
    <property type="protein sequence ID" value="AAH60062.1"/>
    <property type="molecule type" value="mRNA"/>
</dbReference>
<dbReference type="CCDS" id="CCDS19405.1"/>
<dbReference type="PIR" id="A55122">
    <property type="entry name" value="A55122"/>
</dbReference>
<dbReference type="RefSeq" id="NP_031858.1">
    <property type="nucleotide sequence ID" value="NM_007832.4"/>
</dbReference>
<dbReference type="SMR" id="P43346"/>
<dbReference type="BioGRID" id="199066">
    <property type="interactions" value="2"/>
</dbReference>
<dbReference type="FunCoup" id="P43346">
    <property type="interactions" value="2082"/>
</dbReference>
<dbReference type="STRING" id="10090.ENSMUSP00000031311"/>
<dbReference type="BindingDB" id="P43346"/>
<dbReference type="ChEMBL" id="CHEMBL2570"/>
<dbReference type="iPTMnet" id="P43346"/>
<dbReference type="PhosphoSitePlus" id="P43346"/>
<dbReference type="jPOST" id="P43346"/>
<dbReference type="PaxDb" id="10090-ENSMUSP00000031311"/>
<dbReference type="PeptideAtlas" id="P43346"/>
<dbReference type="ProteomicsDB" id="279493"/>
<dbReference type="Pumba" id="P43346"/>
<dbReference type="Antibodypedia" id="12905">
    <property type="antibodies" value="626 antibodies from 38 providers"/>
</dbReference>
<dbReference type="DNASU" id="13178"/>
<dbReference type="Ensembl" id="ENSMUST00000031311.10">
    <property type="protein sequence ID" value="ENSMUSP00000031311.10"/>
    <property type="gene ID" value="ENSMUSG00000029366.11"/>
</dbReference>
<dbReference type="GeneID" id="13178"/>
<dbReference type="KEGG" id="mmu:13178"/>
<dbReference type="UCSC" id="uc008yah.1">
    <property type="organism name" value="mouse"/>
</dbReference>
<dbReference type="AGR" id="MGI:102726"/>
<dbReference type="CTD" id="1633"/>
<dbReference type="MGI" id="MGI:102726">
    <property type="gene designation" value="Dck"/>
</dbReference>
<dbReference type="VEuPathDB" id="HostDB:ENSMUSG00000029366"/>
<dbReference type="eggNOG" id="KOG4235">
    <property type="taxonomic scope" value="Eukaryota"/>
</dbReference>
<dbReference type="GeneTree" id="ENSGT00940000157321"/>
<dbReference type="HOGENOM" id="CLU_030466_1_1_1"/>
<dbReference type="InParanoid" id="P43346"/>
<dbReference type="OMA" id="EAMVMTP"/>
<dbReference type="OrthoDB" id="567086at2759"/>
<dbReference type="PhylomeDB" id="P43346"/>
<dbReference type="TreeFam" id="TF324413"/>
<dbReference type="BRENDA" id="2.7.1.74">
    <property type="organism ID" value="3474"/>
</dbReference>
<dbReference type="Reactome" id="R-MMU-73614">
    <property type="pathway name" value="Pyrimidine salvage"/>
</dbReference>
<dbReference type="Reactome" id="R-MMU-74217">
    <property type="pathway name" value="Purine salvage"/>
</dbReference>
<dbReference type="SABIO-RK" id="P43346"/>
<dbReference type="BioGRID-ORCS" id="13178">
    <property type="hits" value="4 hits in 82 CRISPR screens"/>
</dbReference>
<dbReference type="ChiTaRS" id="Dck">
    <property type="organism name" value="mouse"/>
</dbReference>
<dbReference type="PRO" id="PR:P43346"/>
<dbReference type="Proteomes" id="UP000000589">
    <property type="component" value="Chromosome 5"/>
</dbReference>
<dbReference type="RNAct" id="P43346">
    <property type="molecule type" value="protein"/>
</dbReference>
<dbReference type="Bgee" id="ENSMUSG00000029366">
    <property type="expression patterns" value="Expressed in indifferent gonad and 258 other cell types or tissues"/>
</dbReference>
<dbReference type="ExpressionAtlas" id="P43346">
    <property type="expression patterns" value="baseline and differential"/>
</dbReference>
<dbReference type="GO" id="GO:0005829">
    <property type="term" value="C:cytosol"/>
    <property type="evidence" value="ECO:0000304"/>
    <property type="project" value="MGI"/>
</dbReference>
<dbReference type="GO" id="GO:0005654">
    <property type="term" value="C:nucleoplasm"/>
    <property type="evidence" value="ECO:0007669"/>
    <property type="project" value="Ensembl"/>
</dbReference>
<dbReference type="GO" id="GO:0005524">
    <property type="term" value="F:ATP binding"/>
    <property type="evidence" value="ECO:0007669"/>
    <property type="project" value="UniProtKB-KW"/>
</dbReference>
<dbReference type="GO" id="GO:0043771">
    <property type="term" value="F:cytidine kinase activity"/>
    <property type="evidence" value="ECO:0007669"/>
    <property type="project" value="Ensembl"/>
</dbReference>
<dbReference type="GO" id="GO:0004136">
    <property type="term" value="F:deoxyadenosine kinase activity"/>
    <property type="evidence" value="ECO:0000315"/>
    <property type="project" value="MGI"/>
</dbReference>
<dbReference type="GO" id="GO:0004137">
    <property type="term" value="F:deoxycytidine kinase activity"/>
    <property type="evidence" value="ECO:0000250"/>
    <property type="project" value="UniProtKB"/>
</dbReference>
<dbReference type="GO" id="GO:0004138">
    <property type="term" value="F:deoxyguanosine kinase activity"/>
    <property type="evidence" value="ECO:0000266"/>
    <property type="project" value="MGI"/>
</dbReference>
<dbReference type="GO" id="GO:0042803">
    <property type="term" value="F:protein homodimerization activity"/>
    <property type="evidence" value="ECO:0007669"/>
    <property type="project" value="Ensembl"/>
</dbReference>
<dbReference type="GO" id="GO:0106383">
    <property type="term" value="P:dAMP salvage"/>
    <property type="evidence" value="ECO:0000315"/>
    <property type="project" value="MGI"/>
</dbReference>
<dbReference type="GO" id="GO:0106384">
    <property type="term" value="P:dGMP salvage"/>
    <property type="evidence" value="ECO:0000304"/>
    <property type="project" value="MGI"/>
</dbReference>
<dbReference type="GO" id="GO:0006220">
    <property type="term" value="P:pyrimidine nucleotide metabolic process"/>
    <property type="evidence" value="ECO:0000250"/>
    <property type="project" value="UniProtKB"/>
</dbReference>
<dbReference type="CDD" id="cd01673">
    <property type="entry name" value="dNK"/>
    <property type="match status" value="1"/>
</dbReference>
<dbReference type="FunFam" id="3.40.50.300:FF:000461">
    <property type="entry name" value="Deoxycytidine kinase"/>
    <property type="match status" value="1"/>
</dbReference>
<dbReference type="Gene3D" id="3.40.50.300">
    <property type="entry name" value="P-loop containing nucleotide triphosphate hydrolases"/>
    <property type="match status" value="1"/>
</dbReference>
<dbReference type="InterPro" id="IPR002624">
    <property type="entry name" value="DCK/DGK"/>
</dbReference>
<dbReference type="InterPro" id="IPR050566">
    <property type="entry name" value="Deoxyribonucleoside_kinase"/>
</dbReference>
<dbReference type="InterPro" id="IPR031314">
    <property type="entry name" value="DNK_dom"/>
</dbReference>
<dbReference type="InterPro" id="IPR027417">
    <property type="entry name" value="P-loop_NTPase"/>
</dbReference>
<dbReference type="PANTHER" id="PTHR10513:SF19">
    <property type="entry name" value="DEOXYCYTIDINE KINASE"/>
    <property type="match status" value="1"/>
</dbReference>
<dbReference type="PANTHER" id="PTHR10513">
    <property type="entry name" value="DEOXYNUCLEOSIDE KINASE"/>
    <property type="match status" value="1"/>
</dbReference>
<dbReference type="Pfam" id="PF01712">
    <property type="entry name" value="dNK"/>
    <property type="match status" value="1"/>
</dbReference>
<dbReference type="PIRSF" id="PIRSF000705">
    <property type="entry name" value="DNK"/>
    <property type="match status" value="1"/>
</dbReference>
<dbReference type="SUPFAM" id="SSF52540">
    <property type="entry name" value="P-loop containing nucleoside triphosphate hydrolases"/>
    <property type="match status" value="1"/>
</dbReference>